<name>ISPD_ACTPJ</name>
<comment type="function">
    <text evidence="1">Catalyzes the formation of 4-diphosphocytidyl-2-C-methyl-D-erythritol from CTP and 2-C-methyl-D-erythritol 4-phosphate (MEP).</text>
</comment>
<comment type="catalytic activity">
    <reaction evidence="1">
        <text>2-C-methyl-D-erythritol 4-phosphate + CTP + H(+) = 4-CDP-2-C-methyl-D-erythritol + diphosphate</text>
        <dbReference type="Rhea" id="RHEA:13429"/>
        <dbReference type="ChEBI" id="CHEBI:15378"/>
        <dbReference type="ChEBI" id="CHEBI:33019"/>
        <dbReference type="ChEBI" id="CHEBI:37563"/>
        <dbReference type="ChEBI" id="CHEBI:57823"/>
        <dbReference type="ChEBI" id="CHEBI:58262"/>
        <dbReference type="EC" id="2.7.7.60"/>
    </reaction>
</comment>
<comment type="pathway">
    <text evidence="1">Isoprenoid biosynthesis; isopentenyl diphosphate biosynthesis via DXP pathway; isopentenyl diphosphate from 1-deoxy-D-xylulose 5-phosphate: step 2/6.</text>
</comment>
<comment type="similarity">
    <text evidence="1">Belongs to the IspD/TarI cytidylyltransferase family. IspD subfamily.</text>
</comment>
<feature type="chain" id="PRO_1000094307" description="2-C-methyl-D-erythritol 4-phosphate cytidylyltransferase">
    <location>
        <begin position="1"/>
        <end position="228"/>
    </location>
</feature>
<feature type="site" description="Transition state stabilizer" evidence="1">
    <location>
        <position position="17"/>
    </location>
</feature>
<feature type="site" description="Transition state stabilizer" evidence="1">
    <location>
        <position position="24"/>
    </location>
</feature>
<feature type="site" description="Positions MEP for the nucleophilic attack" evidence="1">
    <location>
        <position position="150"/>
    </location>
</feature>
<feature type="site" description="Positions MEP for the nucleophilic attack" evidence="1">
    <location>
        <position position="206"/>
    </location>
</feature>
<accession>B0BP82</accession>
<evidence type="ECO:0000255" key="1">
    <source>
        <dbReference type="HAMAP-Rule" id="MF_00108"/>
    </source>
</evidence>
<dbReference type="EC" id="2.7.7.60" evidence="1"/>
<dbReference type="EMBL" id="CP000687">
    <property type="protein sequence ID" value="ABY69367.1"/>
    <property type="molecule type" value="Genomic_DNA"/>
</dbReference>
<dbReference type="RefSeq" id="WP_012262968.1">
    <property type="nucleotide sequence ID" value="NC_010278.1"/>
</dbReference>
<dbReference type="SMR" id="B0BP82"/>
<dbReference type="KEGG" id="apj:APJL_0807"/>
<dbReference type="HOGENOM" id="CLU_061281_3_1_6"/>
<dbReference type="UniPathway" id="UPA00056">
    <property type="reaction ID" value="UER00093"/>
</dbReference>
<dbReference type="Proteomes" id="UP000008547">
    <property type="component" value="Chromosome"/>
</dbReference>
<dbReference type="GO" id="GO:0050518">
    <property type="term" value="F:2-C-methyl-D-erythritol 4-phosphate cytidylyltransferase activity"/>
    <property type="evidence" value="ECO:0007669"/>
    <property type="project" value="UniProtKB-UniRule"/>
</dbReference>
<dbReference type="GO" id="GO:0019288">
    <property type="term" value="P:isopentenyl diphosphate biosynthetic process, methylerythritol 4-phosphate pathway"/>
    <property type="evidence" value="ECO:0007669"/>
    <property type="project" value="UniProtKB-UniRule"/>
</dbReference>
<dbReference type="CDD" id="cd02516">
    <property type="entry name" value="CDP-ME_synthetase"/>
    <property type="match status" value="1"/>
</dbReference>
<dbReference type="FunFam" id="3.90.550.10:FF:000003">
    <property type="entry name" value="2-C-methyl-D-erythritol 4-phosphate cytidylyltransferase"/>
    <property type="match status" value="1"/>
</dbReference>
<dbReference type="Gene3D" id="3.90.550.10">
    <property type="entry name" value="Spore Coat Polysaccharide Biosynthesis Protein SpsA, Chain A"/>
    <property type="match status" value="1"/>
</dbReference>
<dbReference type="HAMAP" id="MF_00108">
    <property type="entry name" value="IspD"/>
    <property type="match status" value="1"/>
</dbReference>
<dbReference type="InterPro" id="IPR001228">
    <property type="entry name" value="IspD"/>
</dbReference>
<dbReference type="InterPro" id="IPR034683">
    <property type="entry name" value="IspD/TarI"/>
</dbReference>
<dbReference type="InterPro" id="IPR050088">
    <property type="entry name" value="IspD/TarI_cytidylyltransf_bact"/>
</dbReference>
<dbReference type="InterPro" id="IPR018294">
    <property type="entry name" value="ISPD_synthase_CS"/>
</dbReference>
<dbReference type="InterPro" id="IPR029044">
    <property type="entry name" value="Nucleotide-diphossugar_trans"/>
</dbReference>
<dbReference type="NCBIfam" id="TIGR00453">
    <property type="entry name" value="ispD"/>
    <property type="match status" value="1"/>
</dbReference>
<dbReference type="PANTHER" id="PTHR32125">
    <property type="entry name" value="2-C-METHYL-D-ERYTHRITOL 4-PHOSPHATE CYTIDYLYLTRANSFERASE, CHLOROPLASTIC"/>
    <property type="match status" value="1"/>
</dbReference>
<dbReference type="PANTHER" id="PTHR32125:SF4">
    <property type="entry name" value="2-C-METHYL-D-ERYTHRITOL 4-PHOSPHATE CYTIDYLYLTRANSFERASE, CHLOROPLASTIC"/>
    <property type="match status" value="1"/>
</dbReference>
<dbReference type="Pfam" id="PF01128">
    <property type="entry name" value="IspD"/>
    <property type="match status" value="1"/>
</dbReference>
<dbReference type="SUPFAM" id="SSF53448">
    <property type="entry name" value="Nucleotide-diphospho-sugar transferases"/>
    <property type="match status" value="1"/>
</dbReference>
<dbReference type="PROSITE" id="PS01295">
    <property type="entry name" value="ISPD"/>
    <property type="match status" value="1"/>
</dbReference>
<gene>
    <name evidence="1" type="primary">ispD</name>
    <name type="ordered locus">APJL_0807</name>
</gene>
<sequence>MTRKIIAVIPASGVGSRMQAGLPKQYLKLQNKTILEHTLEIFLAHPDIEKIVVAVAETDPFYPQVALLDSPKIQIVFGGETRAHSVFNALQVIEDDSWVLVHDAARPCLKRSDLDKLLQIDDKQGAILATPAIDTMKRADGNKIMRTEDRSTLWHALTPQFFPTRLLKQALISAFKKNLTVTDEASAMEFNGYQPRLIAGRSDNLKITRPEDLALAEFYLTQNTEKKI</sequence>
<organism>
    <name type="scientific">Actinobacillus pleuropneumoniae serotype 3 (strain JL03)</name>
    <dbReference type="NCBI Taxonomy" id="434271"/>
    <lineage>
        <taxon>Bacteria</taxon>
        <taxon>Pseudomonadati</taxon>
        <taxon>Pseudomonadota</taxon>
        <taxon>Gammaproteobacteria</taxon>
        <taxon>Pasteurellales</taxon>
        <taxon>Pasteurellaceae</taxon>
        <taxon>Actinobacillus</taxon>
    </lineage>
</organism>
<reference key="1">
    <citation type="journal article" date="2008" name="PLoS ONE">
        <title>Genome biology of Actinobacillus pleuropneumoniae JL03, an isolate of serotype 3 prevalent in China.</title>
        <authorList>
            <person name="Xu Z."/>
            <person name="Zhou Y."/>
            <person name="Li L."/>
            <person name="Zhou R."/>
            <person name="Xiao S."/>
            <person name="Wan Y."/>
            <person name="Zhang S."/>
            <person name="Wang K."/>
            <person name="Li W."/>
            <person name="Li L."/>
            <person name="Jin H."/>
            <person name="Kang M."/>
            <person name="Dalai B."/>
            <person name="Li T."/>
            <person name="Liu L."/>
            <person name="Cheng Y."/>
            <person name="Zhang L."/>
            <person name="Xu T."/>
            <person name="Zheng H."/>
            <person name="Pu S."/>
            <person name="Wang B."/>
            <person name="Gu W."/>
            <person name="Zhang X.L."/>
            <person name="Zhu G.-F."/>
            <person name="Wang S."/>
            <person name="Zhao G.-P."/>
            <person name="Chen H."/>
        </authorList>
    </citation>
    <scope>NUCLEOTIDE SEQUENCE [LARGE SCALE GENOMIC DNA]</scope>
    <source>
        <strain>JL03</strain>
    </source>
</reference>
<proteinExistence type="inferred from homology"/>
<protein>
    <recommendedName>
        <fullName evidence="1">2-C-methyl-D-erythritol 4-phosphate cytidylyltransferase</fullName>
        <ecNumber evidence="1">2.7.7.60</ecNumber>
    </recommendedName>
    <alternativeName>
        <fullName evidence="1">4-diphosphocytidyl-2C-methyl-D-erythritol synthase</fullName>
    </alternativeName>
    <alternativeName>
        <fullName evidence="1">MEP cytidylyltransferase</fullName>
        <shortName evidence="1">MCT</shortName>
    </alternativeName>
</protein>
<keyword id="KW-0414">Isoprene biosynthesis</keyword>
<keyword id="KW-0548">Nucleotidyltransferase</keyword>
<keyword id="KW-0808">Transferase</keyword>